<dbReference type="EMBL" id="AF158186">
    <property type="protein sequence ID" value="AAD42887.1"/>
    <property type="molecule type" value="mRNA"/>
</dbReference>
<dbReference type="EMBL" id="BC059114">
    <property type="protein sequence ID" value="AAH59114.1"/>
    <property type="molecule type" value="mRNA"/>
</dbReference>
<dbReference type="EMBL" id="BC086589">
    <property type="protein sequence ID" value="AAH86589.1"/>
    <property type="molecule type" value="mRNA"/>
</dbReference>
<dbReference type="RefSeq" id="NP_620202.1">
    <property type="nucleotide sequence ID" value="NM_138847.2"/>
</dbReference>
<dbReference type="SMR" id="Q9WV50"/>
<dbReference type="FunCoup" id="Q9WV50">
    <property type="interactions" value="2596"/>
</dbReference>
<dbReference type="STRING" id="10116.ENSRNOP00000027653"/>
<dbReference type="PhosphoSitePlus" id="Q9WV50"/>
<dbReference type="PaxDb" id="10116-ENSRNOP00000027653"/>
<dbReference type="Ensembl" id="ENSRNOT00000027653.7">
    <property type="protein sequence ID" value="ENSRNOP00000027653.3"/>
    <property type="gene ID" value="ENSRNOG00000020391.7"/>
</dbReference>
<dbReference type="GeneID" id="192180"/>
<dbReference type="KEGG" id="rno:192180"/>
<dbReference type="UCSC" id="RGD:620069">
    <property type="organism name" value="rat"/>
</dbReference>
<dbReference type="AGR" id="RGD:620069"/>
<dbReference type="CTD" id="51388"/>
<dbReference type="RGD" id="620069">
    <property type="gene designation" value="Nip7"/>
</dbReference>
<dbReference type="eggNOG" id="KOG3492">
    <property type="taxonomic scope" value="Eukaryota"/>
</dbReference>
<dbReference type="GeneTree" id="ENSGT00950000182971"/>
<dbReference type="HOGENOM" id="CLU_097217_0_0_1"/>
<dbReference type="InParanoid" id="Q9WV50"/>
<dbReference type="OMA" id="LISMGTC"/>
<dbReference type="OrthoDB" id="27490at2759"/>
<dbReference type="PhylomeDB" id="Q9WV50"/>
<dbReference type="TreeFam" id="TF300081"/>
<dbReference type="Reactome" id="R-RNO-6791226">
    <property type="pathway name" value="Major pathway of rRNA processing in the nucleolus and cytosol"/>
</dbReference>
<dbReference type="PRO" id="PR:Q9WV50"/>
<dbReference type="Proteomes" id="UP000002494">
    <property type="component" value="Chromosome 19"/>
</dbReference>
<dbReference type="Bgee" id="ENSRNOG00000020391">
    <property type="expression patterns" value="Expressed in thymus and 20 other cell types or tissues"/>
</dbReference>
<dbReference type="GO" id="GO:0005730">
    <property type="term" value="C:nucleolus"/>
    <property type="evidence" value="ECO:0000318"/>
    <property type="project" value="GO_Central"/>
</dbReference>
<dbReference type="GO" id="GO:0030687">
    <property type="term" value="C:preribosome, large subunit precursor"/>
    <property type="evidence" value="ECO:0000318"/>
    <property type="project" value="GO_Central"/>
</dbReference>
<dbReference type="GO" id="GO:0003723">
    <property type="term" value="F:RNA binding"/>
    <property type="evidence" value="ECO:0007669"/>
    <property type="project" value="UniProtKB-KW"/>
</dbReference>
<dbReference type="GO" id="GO:0042273">
    <property type="term" value="P:ribosomal large subunit biogenesis"/>
    <property type="evidence" value="ECO:0000318"/>
    <property type="project" value="GO_Central"/>
</dbReference>
<dbReference type="GO" id="GO:0042255">
    <property type="term" value="P:ribosome assembly"/>
    <property type="evidence" value="ECO:0007669"/>
    <property type="project" value="InterPro"/>
</dbReference>
<dbReference type="CDD" id="cd21146">
    <property type="entry name" value="Nip7_N_euk"/>
    <property type="match status" value="1"/>
</dbReference>
<dbReference type="CDD" id="cd21151">
    <property type="entry name" value="PUA_Nip7-like"/>
    <property type="match status" value="1"/>
</dbReference>
<dbReference type="FunFam" id="2.30.130.10:FF:000002">
    <property type="entry name" value="60S ribosome subunit biogenesis protein NIP7 homolog"/>
    <property type="match status" value="1"/>
</dbReference>
<dbReference type="FunFam" id="3.10.450.220:FF:000001">
    <property type="entry name" value="60S ribosome subunit biogenesis protein NIP7 homolog"/>
    <property type="match status" value="1"/>
</dbReference>
<dbReference type="Gene3D" id="3.10.450.220">
    <property type="match status" value="1"/>
</dbReference>
<dbReference type="Gene3D" id="2.30.130.10">
    <property type="entry name" value="PUA domain"/>
    <property type="match status" value="1"/>
</dbReference>
<dbReference type="InterPro" id="IPR040598">
    <property type="entry name" value="NIP7_N"/>
</dbReference>
<dbReference type="InterPro" id="IPR055359">
    <property type="entry name" value="Nip7_N_euk"/>
</dbReference>
<dbReference type="InterPro" id="IPR002478">
    <property type="entry name" value="PUA"/>
</dbReference>
<dbReference type="InterPro" id="IPR015947">
    <property type="entry name" value="PUA-like_sf"/>
</dbReference>
<dbReference type="InterPro" id="IPR036974">
    <property type="entry name" value="PUA_sf"/>
</dbReference>
<dbReference type="InterPro" id="IPR016686">
    <property type="entry name" value="Ribosomal_synth_fac_NIP7"/>
</dbReference>
<dbReference type="InterPro" id="IPR005155">
    <property type="entry name" value="UPF0113_PUA"/>
</dbReference>
<dbReference type="PANTHER" id="PTHR23415">
    <property type="entry name" value="CYCLIN-DEPENDENT KINASES REGULATORY SUBUNIT/60S RIBOSOME SUBUNIT BIOGENESIS PROTEIN NIP7"/>
    <property type="match status" value="1"/>
</dbReference>
<dbReference type="Pfam" id="PF17833">
    <property type="entry name" value="pre-PUA_NIP7"/>
    <property type="match status" value="1"/>
</dbReference>
<dbReference type="Pfam" id="PF03657">
    <property type="entry name" value="UPF0113"/>
    <property type="match status" value="1"/>
</dbReference>
<dbReference type="PIRSF" id="PIRSF017190">
    <property type="entry name" value="Rbsml_synth_fac_NIP7"/>
    <property type="match status" value="1"/>
</dbReference>
<dbReference type="SMART" id="SM00359">
    <property type="entry name" value="PUA"/>
    <property type="match status" value="1"/>
</dbReference>
<dbReference type="SUPFAM" id="SSF88802">
    <property type="entry name" value="Pre-PUA domain"/>
    <property type="match status" value="1"/>
</dbReference>
<dbReference type="SUPFAM" id="SSF88697">
    <property type="entry name" value="PUA domain-like"/>
    <property type="match status" value="1"/>
</dbReference>
<dbReference type="PROSITE" id="PS50890">
    <property type="entry name" value="PUA"/>
    <property type="match status" value="1"/>
</dbReference>
<organism>
    <name type="scientific">Rattus norvegicus</name>
    <name type="common">Rat</name>
    <dbReference type="NCBI Taxonomy" id="10116"/>
    <lineage>
        <taxon>Eukaryota</taxon>
        <taxon>Metazoa</taxon>
        <taxon>Chordata</taxon>
        <taxon>Craniata</taxon>
        <taxon>Vertebrata</taxon>
        <taxon>Euteleostomi</taxon>
        <taxon>Mammalia</taxon>
        <taxon>Eutheria</taxon>
        <taxon>Euarchontoglires</taxon>
        <taxon>Glires</taxon>
        <taxon>Rodentia</taxon>
        <taxon>Myomorpha</taxon>
        <taxon>Muroidea</taxon>
        <taxon>Muridae</taxon>
        <taxon>Murinae</taxon>
        <taxon>Rattus</taxon>
    </lineage>
</organism>
<reference key="1">
    <citation type="submission" date="1999-06" db="EMBL/GenBank/DDBJ databases">
        <title>Cloning and characterization of pEachy, a rat sequence with homology to Saccharomyces cerevisiae Nip7p.</title>
        <authorList>
            <person name="Wang Z."/>
            <person name="Tenniswood M."/>
        </authorList>
    </citation>
    <scope>NUCLEOTIDE SEQUENCE [MRNA]</scope>
    <source>
        <strain>Sprague-Dawley</strain>
        <tissue>Kidney</tissue>
    </source>
</reference>
<reference key="2">
    <citation type="journal article" date="2004" name="Genome Res.">
        <title>The status, quality, and expansion of the NIH full-length cDNA project: the Mammalian Gene Collection (MGC).</title>
        <authorList>
            <consortium name="The MGC Project Team"/>
        </authorList>
    </citation>
    <scope>NUCLEOTIDE SEQUENCE [LARGE SCALE MRNA]</scope>
    <source>
        <tissue>Ovary</tissue>
        <tissue>Pituitary</tissue>
    </source>
</reference>
<sequence length="180" mass="20432">MRPLTEEETRVMFEKIAKYIGENLQLLVDRPDGTYCFRLHNDRVYYVSEMILKLAANISGDKLVSLGTCFGKFTKTHKFRLHVTALDFLAPYAKYKVWIKPGAEQSFLYGNHVLKSGLGRITENTSQYQGVVVYSMADVPLGFGVAAKSTQDCRKVDPMAIVVFHQADIGEYIRHEETLT</sequence>
<accession>Q9WV50</accession>
<accession>Q5RJL7</accession>
<proteinExistence type="evidence at transcript level"/>
<protein>
    <recommendedName>
        <fullName>60S ribosome subunit biogenesis protein NIP7 homolog</fullName>
    </recommendedName>
    <alternativeName>
        <fullName>Nucleolar pre-rRNA processing protein NIP7</fullName>
    </alternativeName>
    <alternativeName>
        <fullName>PEachy</fullName>
    </alternativeName>
    <alternativeName>
        <fullName>kDa93</fullName>
    </alternativeName>
</protein>
<comment type="function">
    <text evidence="1">Required for proper 34S pre-rRNA processing and 60S ribosome subunit assembly.</text>
</comment>
<comment type="subunit">
    <text evidence="2">Monomer. Interacts with pre-ribosome complex. May bind to RNA. Interacts with NOL8. Interacts with FTSJ3 (By similarity). Interacts with DDX24 (By similarity).</text>
</comment>
<comment type="subcellular location">
    <subcellularLocation>
        <location evidence="1">Nucleus</location>
        <location evidence="1">Nucleolus</location>
    </subcellularLocation>
</comment>
<comment type="similarity">
    <text evidence="4">Belongs to the NIP7 family.</text>
</comment>
<name>NIP7_RAT</name>
<evidence type="ECO:0000250" key="1"/>
<evidence type="ECO:0000250" key="2">
    <source>
        <dbReference type="UniProtKB" id="Q9Y221"/>
    </source>
</evidence>
<evidence type="ECO:0000255" key="3">
    <source>
        <dbReference type="PROSITE-ProRule" id="PRU00161"/>
    </source>
</evidence>
<evidence type="ECO:0000305" key="4"/>
<keyword id="KW-0539">Nucleus</keyword>
<keyword id="KW-1185">Reference proteome</keyword>
<keyword id="KW-0690">Ribosome biogenesis</keyword>
<keyword id="KW-0694">RNA-binding</keyword>
<feature type="chain" id="PRO_0000218775" description="60S ribosome subunit biogenesis protein NIP7 homolog">
    <location>
        <begin position="1"/>
        <end position="180"/>
    </location>
</feature>
<feature type="domain" description="PUA" evidence="3">
    <location>
        <begin position="94"/>
        <end position="170"/>
    </location>
</feature>
<feature type="region of interest" description="N-terminal domain" evidence="1">
    <location>
        <begin position="1"/>
        <end position="92"/>
    </location>
</feature>
<feature type="region of interest" description="C-terminal domain" evidence="1">
    <location>
        <begin position="93"/>
        <end position="180"/>
    </location>
</feature>
<gene>
    <name type="primary">Nip7</name>
    <name type="synonym">Peachy</name>
</gene>